<proteinExistence type="evidence at protein level"/>
<name>CRJ38_CRYJA</name>
<protein>
    <recommendedName>
        <fullName evidence="9">Pathogenesis-related thaumatin-like protein 3.8</fullName>
    </recommendedName>
    <allergenName evidence="6">Cry j 3.8</allergenName>
</protein>
<reference key="1">
    <citation type="journal article" date="2007" name="Allergy">
        <title>Isolation and characterization of native Cry j 3 from Japanese cedar (Cryptomeria japonica) pollen.</title>
        <authorList>
            <person name="Fujimura T."/>
            <person name="Futamura N."/>
            <person name="Midoro-Horiuti T."/>
            <person name="Togawa A."/>
            <person name="Goldblum R.M."/>
            <person name="Yasueda H."/>
            <person name="Saito A."/>
            <person name="Shinohara K."/>
            <person name="Masuda K."/>
            <person name="Kurata K."/>
            <person name="Sakaguchi M."/>
        </authorList>
    </citation>
    <scope>NUCLEOTIDE SEQUENCE [MRNA]</scope>
    <scope>ALLERGEN</scope>
    <source>
        <tissue>Flower</tissue>
    </source>
</reference>
<reference key="2">
    <citation type="journal article" date="2008" name="BMC Genomics">
        <title>Characterization of expressed sequence tags from a full-length enriched cDNA library of Cryptomeria japonica male strobili.</title>
        <authorList>
            <person name="Futamura N."/>
            <person name="Totoki Y."/>
            <person name="Toyoda A."/>
            <person name="Igasaki T."/>
            <person name="Nanjo T."/>
            <person name="Seki M."/>
            <person name="Sakaki Y."/>
            <person name="Mari A."/>
            <person name="Shinozaki K."/>
            <person name="Shinohara K."/>
        </authorList>
    </citation>
    <scope>NUCLEOTIDE SEQUENCE [MRNA] OF 1-182</scope>
    <source>
        <tissue>Cone</tissue>
    </source>
</reference>
<reference key="3">
    <citation type="journal article" date="2010" name="Plant Cell Rep.">
        <title>The superfamily of thaumatin-like proteins: its origin, evolution, and expression towards biological function.</title>
        <authorList>
            <person name="Liu J.-J."/>
            <person name="Sturrock R."/>
            <person name="Ekramoddoullah A.K.M."/>
        </authorList>
    </citation>
    <scope>REVIEW ON THAUMATIN-LIKE PROTEINS</scope>
</reference>
<reference key="4">
    <citation type="journal article" date="2012" name="Vet. Immunol. Immunopathol.">
        <title>IgE reactivity to a Cry j 3, an allergen of Japanese cedar (Cryptomeria japonica) pollen in dogs with canine atopic dermatitis.</title>
        <authorList>
            <person name="Kubota S."/>
            <person name="Miyaji K."/>
            <person name="Shimo Y."/>
            <person name="Shimakura H."/>
            <person name="Takase Y."/>
            <person name="Okamoto N."/>
            <person name="Kiuchi A."/>
            <person name="Fujimura M."/>
            <person name="Fujimura T."/>
            <person name="DeBoer D.J."/>
            <person name="Tsukui T."/>
            <person name="Sakaguchi M."/>
        </authorList>
    </citation>
    <scope>ALLERGEN</scope>
    <source>
        <tissue>Pollen</tissue>
    </source>
</reference>
<reference key="5">
    <citation type="journal article" date="2015" name="Allergol. Int.">
        <title>Spectrum of allergens for Japanese cedar pollinosis and impact of component-resolved diagnosis on allergen-specific immunotherapy.</title>
        <authorList>
            <person name="Fujimura T."/>
            <person name="Kawamoto S."/>
        </authorList>
    </citation>
    <scope>REVIEW ON ALLERGEN</scope>
</reference>
<accession>A4PBQ1</accession>
<organism>
    <name type="scientific">Cryptomeria japonica</name>
    <name type="common">Japanese cedar</name>
    <name type="synonym">Cupressus japonica</name>
    <dbReference type="NCBI Taxonomy" id="3369"/>
    <lineage>
        <taxon>Eukaryota</taxon>
        <taxon>Viridiplantae</taxon>
        <taxon>Streptophyta</taxon>
        <taxon>Embryophyta</taxon>
        <taxon>Tracheophyta</taxon>
        <taxon>Spermatophyta</taxon>
        <taxon>Pinopsida</taxon>
        <taxon>Pinidae</taxon>
        <taxon>Conifers II</taxon>
        <taxon>Cupressales</taxon>
        <taxon>Cupressaceae</taxon>
        <taxon>Cryptomeria</taxon>
    </lineage>
</organism>
<sequence>MAKVSDLALLLVAGMAISLYIQETGAVKFDIKNQCGYTVWAAGLPGGGQQLTQGQTWTVNLAAGTQSARFWGRTGCSFDASGKGTCQTGDCGGQLSCTVSGAVPATLAEYTQSDQDYYDVSLVDGFNIPLSINPTNAQCTAPACKADVNAVCPAELKVDGGCKSACAAFQTDQYCCTGTYANSCPATNYSMIFKNQCPQAYSYPKDDTATFACPSGTDYSIVFCP</sequence>
<feature type="signal peptide" evidence="1">
    <location>
        <begin position="1"/>
        <end position="26"/>
    </location>
</feature>
<feature type="chain" id="PRO_5002671462" description="Pathogenesis-related thaumatin-like protein 3.8">
    <location>
        <begin position="27"/>
        <end position="225"/>
    </location>
</feature>
<feature type="glycosylation site" description="N-linked (GlcNAc...) asparagine" evidence="2">
    <location>
        <position position="188"/>
    </location>
</feature>
<feature type="disulfide bond" evidence="3">
    <location>
        <begin position="35"/>
        <end position="224"/>
    </location>
</feature>
<feature type="disulfide bond" evidence="3">
    <location>
        <begin position="76"/>
        <end position="86"/>
    </location>
</feature>
<feature type="disulfide bond" evidence="3">
    <location>
        <begin position="91"/>
        <end position="97"/>
    </location>
</feature>
<feature type="disulfide bond" evidence="3">
    <location>
        <begin position="139"/>
        <end position="213"/>
    </location>
</feature>
<feature type="disulfide bond" evidence="3">
    <location>
        <begin position="144"/>
        <end position="197"/>
    </location>
</feature>
<feature type="disulfide bond" evidence="3">
    <location>
        <begin position="152"/>
        <end position="162"/>
    </location>
</feature>
<feature type="disulfide bond" evidence="3">
    <location>
        <begin position="166"/>
        <end position="175"/>
    </location>
</feature>
<feature type="disulfide bond" evidence="3">
    <location>
        <begin position="176"/>
        <end position="184"/>
    </location>
</feature>
<keyword id="KW-0020">Allergen</keyword>
<keyword id="KW-1015">Disulfide bond</keyword>
<keyword id="KW-0325">Glycoprotein</keyword>
<keyword id="KW-0568">Pathogenesis-related protein</keyword>
<keyword id="KW-0611">Plant defense</keyword>
<keyword id="KW-0732">Signal</keyword>
<keyword id="KW-0346">Stress response</keyword>
<comment type="function">
    <text evidence="7">May be involved in disease resistance.</text>
</comment>
<comment type="allergen">
    <text evidence="4 5 8">Causes an oral allergy syndrome (OAS) reaction in human and animals (PubMed:17441795, PubMed:22749702, PubMed:26433527). Binds to IgE and induces the release of histamine from leukocytes of allergic patients (PubMed:17441795). Binds to IgE from canine atopic dermatitis (CAD) sensitive dogs (PubMed:22749702).</text>
</comment>
<comment type="similarity">
    <text evidence="3">Belongs to the thaumatin family.</text>
</comment>
<dbReference type="EMBL" id="AB254807">
    <property type="protein sequence ID" value="BAF51970.1"/>
    <property type="molecule type" value="mRNA"/>
</dbReference>
<dbReference type="EMBL" id="BY891770">
    <property type="status" value="NOT_ANNOTATED_CDS"/>
    <property type="molecule type" value="mRNA"/>
</dbReference>
<dbReference type="RefSeq" id="NP_001414805.1">
    <property type="nucleotide sequence ID" value="NM_001427876.1"/>
</dbReference>
<dbReference type="SMR" id="A4PBQ1"/>
<dbReference type="GeneID" id="131067080"/>
<dbReference type="OrthoDB" id="430315at2759"/>
<dbReference type="GO" id="GO:0006952">
    <property type="term" value="P:defense response"/>
    <property type="evidence" value="ECO:0007669"/>
    <property type="project" value="UniProtKB-KW"/>
</dbReference>
<dbReference type="FunFam" id="2.60.110.10:FF:000003">
    <property type="entry name" value="Thaumatin I"/>
    <property type="match status" value="1"/>
</dbReference>
<dbReference type="Gene3D" id="2.60.110.10">
    <property type="entry name" value="Thaumatin"/>
    <property type="match status" value="1"/>
</dbReference>
<dbReference type="InterPro" id="IPR037176">
    <property type="entry name" value="Osmotin/thaumatin-like_sf"/>
</dbReference>
<dbReference type="InterPro" id="IPR001938">
    <property type="entry name" value="Thaumatin"/>
</dbReference>
<dbReference type="InterPro" id="IPR017949">
    <property type="entry name" value="Thaumatin_CS"/>
</dbReference>
<dbReference type="PANTHER" id="PTHR31048">
    <property type="entry name" value="OS03G0233200 PROTEIN"/>
    <property type="match status" value="1"/>
</dbReference>
<dbReference type="Pfam" id="PF00314">
    <property type="entry name" value="Thaumatin"/>
    <property type="match status" value="1"/>
</dbReference>
<dbReference type="PIRSF" id="PIRSF002703">
    <property type="entry name" value="Thaumatin"/>
    <property type="match status" value="1"/>
</dbReference>
<dbReference type="PRINTS" id="PR00347">
    <property type="entry name" value="THAUMATIN"/>
</dbReference>
<dbReference type="SMART" id="SM00205">
    <property type="entry name" value="THN"/>
    <property type="match status" value="1"/>
</dbReference>
<dbReference type="SUPFAM" id="SSF49870">
    <property type="entry name" value="Osmotin, thaumatin-like protein"/>
    <property type="match status" value="1"/>
</dbReference>
<dbReference type="PROSITE" id="PS00316">
    <property type="entry name" value="THAUMATIN_1"/>
    <property type="match status" value="1"/>
</dbReference>
<dbReference type="PROSITE" id="PS51367">
    <property type="entry name" value="THAUMATIN_2"/>
    <property type="match status" value="1"/>
</dbReference>
<evidence type="ECO:0000255" key="1"/>
<evidence type="ECO:0000255" key="2">
    <source>
        <dbReference type="PROSITE-ProRule" id="PRU00498"/>
    </source>
</evidence>
<evidence type="ECO:0000255" key="3">
    <source>
        <dbReference type="PROSITE-ProRule" id="PRU00699"/>
    </source>
</evidence>
<evidence type="ECO:0000269" key="4">
    <source>
    </source>
</evidence>
<evidence type="ECO:0000269" key="5">
    <source>
    </source>
</evidence>
<evidence type="ECO:0000303" key="6">
    <source>
    </source>
</evidence>
<evidence type="ECO:0000303" key="7">
    <source>
    </source>
</evidence>
<evidence type="ECO:0000303" key="8">
    <source>
    </source>
</evidence>
<evidence type="ECO:0000305" key="9"/>